<name>SYY_PYRHO</name>
<organism>
    <name type="scientific">Pyrococcus horikoshii (strain ATCC 700860 / DSM 12428 / JCM 9974 / NBRC 100139 / OT-3)</name>
    <dbReference type="NCBI Taxonomy" id="70601"/>
    <lineage>
        <taxon>Archaea</taxon>
        <taxon>Methanobacteriati</taxon>
        <taxon>Methanobacteriota</taxon>
        <taxon>Thermococci</taxon>
        <taxon>Thermococcales</taxon>
        <taxon>Thermococcaceae</taxon>
        <taxon>Pyrococcus</taxon>
    </lineage>
</organism>
<proteinExistence type="evidence at protein level"/>
<comment type="function">
    <text evidence="1">Catalyzes the attachment of tyrosine to tRNA(Tyr) in a two-step reaction: tyrosine is first activated by ATP to form Tyr-AMP and then transferred to the acceptor end of tRNA(Tyr).</text>
</comment>
<comment type="catalytic activity">
    <reaction evidence="1">
        <text>tRNA(Tyr) + L-tyrosine + ATP = L-tyrosyl-tRNA(Tyr) + AMP + diphosphate + H(+)</text>
        <dbReference type="Rhea" id="RHEA:10220"/>
        <dbReference type="Rhea" id="RHEA-COMP:9706"/>
        <dbReference type="Rhea" id="RHEA-COMP:9707"/>
        <dbReference type="ChEBI" id="CHEBI:15378"/>
        <dbReference type="ChEBI" id="CHEBI:30616"/>
        <dbReference type="ChEBI" id="CHEBI:33019"/>
        <dbReference type="ChEBI" id="CHEBI:58315"/>
        <dbReference type="ChEBI" id="CHEBI:78442"/>
        <dbReference type="ChEBI" id="CHEBI:78536"/>
        <dbReference type="ChEBI" id="CHEBI:456215"/>
        <dbReference type="EC" id="6.1.1.1"/>
    </reaction>
</comment>
<comment type="subunit">
    <text evidence="1 2">Homodimer.</text>
</comment>
<comment type="subcellular location">
    <subcellularLocation>
        <location evidence="1">Cytoplasm</location>
    </subcellularLocation>
</comment>
<comment type="similarity">
    <text evidence="1">Belongs to the class-I aminoacyl-tRNA synthetase family. TyrS type 4 subfamily.</text>
</comment>
<sequence>MDIEERINLVLKKPTEEVLTVENLRHLFEIGAPLQHYIGFEISGYIHLGTGLMAGAKIADFQKAGIKTRVFLADWHSWINDKLGGDLEVIQEVALKYFKVGMEKSIEVMGGDPKKVEFVLASEILEKGDYWQTVIDISKNVTLSRVMRSITIMGRQMGEAIDFAKLIYPMMQVADIFYQGVTIAHAGMDQRKAHVIAIEVAQKLRYHPIVHEGEKLKPVAVHHHLLLGLQEPPKWPIESEEEFKEIKAQMKMSKSKPYSAVFIHDSPEEIRQKLRKAFCPAREVRYNPVLDWVEYIIFREEPTEFTVHRPAKFGGDVTYTTFEELKRDFAEGKLHPLDLKNAVAEYLINLLEPIRRYFEKHPEPLELMRSVKITR</sequence>
<evidence type="ECO:0000255" key="1">
    <source>
        <dbReference type="HAMAP-Rule" id="MF_02009"/>
    </source>
</evidence>
<evidence type="ECO:0000269" key="2">
    <source>
    </source>
</evidence>
<evidence type="ECO:0007829" key="3">
    <source>
        <dbReference type="PDB" id="2CYC"/>
    </source>
</evidence>
<protein>
    <recommendedName>
        <fullName evidence="1">Tyrosine--tRNA ligase</fullName>
        <ecNumber evidence="1">6.1.1.1</ecNumber>
    </recommendedName>
    <alternativeName>
        <fullName evidence="1">Tyrosyl-tRNA synthetase</fullName>
        <shortName evidence="1">TyrRS</shortName>
    </alternativeName>
</protein>
<feature type="chain" id="PRO_0000240269" description="Tyrosine--tRNA ligase">
    <location>
        <begin position="1"/>
        <end position="375"/>
    </location>
</feature>
<feature type="short sequence motif" description="'KMSKS' region">
    <location>
        <begin position="251"/>
        <end position="255"/>
    </location>
</feature>
<feature type="binding site" evidence="1 2">
    <location>
        <position position="37"/>
    </location>
    <ligand>
        <name>L-tyrosine</name>
        <dbReference type="ChEBI" id="CHEBI:58315"/>
    </ligand>
</feature>
<feature type="binding site" evidence="1 2">
    <location>
        <position position="168"/>
    </location>
    <ligand>
        <name>L-tyrosine</name>
        <dbReference type="ChEBI" id="CHEBI:58315"/>
    </ligand>
</feature>
<feature type="binding site" evidence="1 2">
    <location>
        <position position="172"/>
    </location>
    <ligand>
        <name>L-tyrosine</name>
        <dbReference type="ChEBI" id="CHEBI:58315"/>
    </ligand>
</feature>
<feature type="binding site" evidence="1 2">
    <location>
        <position position="175"/>
    </location>
    <ligand>
        <name>L-tyrosine</name>
        <dbReference type="ChEBI" id="CHEBI:58315"/>
    </ligand>
</feature>
<feature type="binding site" evidence="1 2">
    <location>
        <position position="190"/>
    </location>
    <ligand>
        <name>L-tyrosine</name>
        <dbReference type="ChEBI" id="CHEBI:58315"/>
    </ligand>
</feature>
<feature type="binding site" evidence="1">
    <location>
        <position position="254"/>
    </location>
    <ligand>
        <name>ATP</name>
        <dbReference type="ChEBI" id="CHEBI:30616"/>
    </ligand>
</feature>
<feature type="helix" evidence="3">
    <location>
        <begin position="3"/>
        <end position="11"/>
    </location>
</feature>
<feature type="strand" evidence="3">
    <location>
        <begin position="15"/>
        <end position="19"/>
    </location>
</feature>
<feature type="helix" evidence="3">
    <location>
        <begin position="21"/>
        <end position="30"/>
    </location>
</feature>
<feature type="strand" evidence="3">
    <location>
        <begin position="35"/>
        <end position="40"/>
    </location>
</feature>
<feature type="helix" evidence="3">
    <location>
        <begin position="48"/>
        <end position="63"/>
    </location>
</feature>
<feature type="strand" evidence="3">
    <location>
        <begin position="69"/>
        <end position="72"/>
    </location>
</feature>
<feature type="helix" evidence="3">
    <location>
        <begin position="74"/>
        <end position="79"/>
    </location>
</feature>
<feature type="helix" evidence="3">
    <location>
        <begin position="82"/>
        <end position="85"/>
    </location>
</feature>
<feature type="helix" evidence="3">
    <location>
        <begin position="87"/>
        <end position="96"/>
    </location>
</feature>
<feature type="helix" evidence="3">
    <location>
        <begin position="98"/>
        <end position="108"/>
    </location>
</feature>
<feature type="helix" evidence="3">
    <location>
        <begin position="113"/>
        <end position="115"/>
    </location>
</feature>
<feature type="strand" evidence="3">
    <location>
        <begin position="116"/>
        <end position="120"/>
    </location>
</feature>
<feature type="helix" evidence="3">
    <location>
        <begin position="122"/>
        <end position="125"/>
    </location>
</feature>
<feature type="helix" evidence="3">
    <location>
        <begin position="128"/>
        <end position="138"/>
    </location>
</feature>
<feature type="helix" evidence="3">
    <location>
        <begin position="143"/>
        <end position="148"/>
    </location>
</feature>
<feature type="helix" evidence="3">
    <location>
        <begin position="149"/>
        <end position="153"/>
    </location>
</feature>
<feature type="helix" evidence="3">
    <location>
        <begin position="164"/>
        <end position="178"/>
    </location>
</feature>
<feature type="strand" evidence="3">
    <location>
        <begin position="182"/>
        <end position="187"/>
    </location>
</feature>
<feature type="helix" evidence="3">
    <location>
        <begin position="188"/>
        <end position="190"/>
    </location>
</feature>
<feature type="helix" evidence="3">
    <location>
        <begin position="191"/>
        <end position="200"/>
    </location>
</feature>
<feature type="helix" evidence="3">
    <location>
        <begin position="201"/>
        <end position="203"/>
    </location>
</feature>
<feature type="strand" evidence="3">
    <location>
        <begin position="205"/>
        <end position="207"/>
    </location>
</feature>
<feature type="strand" evidence="3">
    <location>
        <begin position="209"/>
        <end position="211"/>
    </location>
</feature>
<feature type="strand" evidence="3">
    <location>
        <begin position="214"/>
        <end position="216"/>
    </location>
</feature>
<feature type="strand" evidence="3">
    <location>
        <begin position="219"/>
        <end position="223"/>
    </location>
</feature>
<feature type="strand" evidence="3">
    <location>
        <begin position="233"/>
        <end position="236"/>
    </location>
</feature>
<feature type="helix" evidence="3">
    <location>
        <begin position="240"/>
        <end position="250"/>
    </location>
</feature>
<feature type="helix" evidence="3">
    <location>
        <begin position="252"/>
        <end position="254"/>
    </location>
</feature>
<feature type="helix" evidence="3">
    <location>
        <begin position="257"/>
        <end position="259"/>
    </location>
</feature>
<feature type="helix" evidence="3">
    <location>
        <begin position="267"/>
        <end position="276"/>
    </location>
</feature>
<feature type="helix" evidence="3">
    <location>
        <begin position="288"/>
        <end position="295"/>
    </location>
</feature>
<feature type="turn" evidence="3">
    <location>
        <begin position="296"/>
        <end position="298"/>
    </location>
</feature>
<feature type="strand" evidence="3">
    <location>
        <begin position="299"/>
        <end position="302"/>
    </location>
</feature>
<feature type="strand" evidence="3">
    <location>
        <begin position="305"/>
        <end position="307"/>
    </location>
</feature>
<feature type="helix" evidence="3">
    <location>
        <begin position="311"/>
        <end position="313"/>
    </location>
</feature>
<feature type="strand" evidence="3">
    <location>
        <begin position="317"/>
        <end position="321"/>
    </location>
</feature>
<feature type="helix" evidence="3">
    <location>
        <begin position="322"/>
        <end position="330"/>
    </location>
</feature>
<feature type="helix" evidence="3">
    <location>
        <begin position="336"/>
        <end position="350"/>
    </location>
</feature>
<feature type="helix" evidence="3">
    <location>
        <begin position="352"/>
        <end position="360"/>
    </location>
</feature>
<feature type="helix" evidence="3">
    <location>
        <begin position="363"/>
        <end position="370"/>
    </location>
</feature>
<reference key="1">
    <citation type="journal article" date="1998" name="DNA Res.">
        <title>Complete sequence and gene organization of the genome of a hyper-thermophilic archaebacterium, Pyrococcus horikoshii OT3.</title>
        <authorList>
            <person name="Kawarabayasi Y."/>
            <person name="Sawada M."/>
            <person name="Horikawa H."/>
            <person name="Haikawa Y."/>
            <person name="Hino Y."/>
            <person name="Yamamoto S."/>
            <person name="Sekine M."/>
            <person name="Baba S."/>
            <person name="Kosugi H."/>
            <person name="Hosoyama A."/>
            <person name="Nagai Y."/>
            <person name="Sakai M."/>
            <person name="Ogura K."/>
            <person name="Otsuka R."/>
            <person name="Nakazawa H."/>
            <person name="Takamiya M."/>
            <person name="Ohfuku Y."/>
            <person name="Funahashi T."/>
            <person name="Tanaka T."/>
            <person name="Kudoh Y."/>
            <person name="Yamazaki J."/>
            <person name="Kushida N."/>
            <person name="Oguchi A."/>
            <person name="Aoki K."/>
            <person name="Yoshizawa T."/>
            <person name="Nakamura Y."/>
            <person name="Robb F.T."/>
            <person name="Horikoshi K."/>
            <person name="Masuchi Y."/>
            <person name="Shizuya H."/>
            <person name="Kikuchi H."/>
        </authorList>
    </citation>
    <scope>NUCLEOTIDE SEQUENCE [LARGE SCALE GENOMIC DNA]</scope>
    <source>
        <strain>ATCC 700860 / DSM 12428 / JCM 9974 / NBRC 100139 / OT-3</strain>
    </source>
</reference>
<reference key="2">
    <citation type="journal article" date="2006" name="J. Mol. Biol.">
        <title>Crystal structures of tyrosyl-tRNA synthetases from Archaea.</title>
        <authorList>
            <person name="Kuratani M."/>
            <person name="Sakai H."/>
            <person name="Takahashi M."/>
            <person name="Yanagisawa T."/>
            <person name="Kobayashi T."/>
            <person name="Murayama K."/>
            <person name="Chen L."/>
            <person name="Liu Z.-J."/>
            <person name="Wang B.-C."/>
            <person name="Kuroishi C."/>
            <person name="Kuramitsu S."/>
            <person name="Terada T."/>
            <person name="Bessho Y."/>
            <person name="Shirouzu M."/>
            <person name="Sekine S."/>
            <person name="Yokoyama S."/>
        </authorList>
    </citation>
    <scope>X-RAY CRYSTALLOGRAPHY (2.2 ANGSTROMS) IN COMPLEX WITH TYROSINE</scope>
    <scope>SUBUNIT</scope>
</reference>
<accession>O58739</accession>
<dbReference type="EC" id="6.1.1.1" evidence="1"/>
<dbReference type="EMBL" id="BA000001">
    <property type="protein sequence ID" value="BAA30108.1"/>
    <property type="molecule type" value="Genomic_DNA"/>
</dbReference>
<dbReference type="PIR" id="F71093">
    <property type="entry name" value="F71093"/>
</dbReference>
<dbReference type="RefSeq" id="WP_010885097.1">
    <property type="nucleotide sequence ID" value="NC_000961.1"/>
</dbReference>
<dbReference type="PDB" id="2CYC">
    <property type="method" value="X-ray"/>
    <property type="resolution" value="2.20 A"/>
    <property type="chains" value="A/B=1-375"/>
</dbReference>
<dbReference type="PDBsum" id="2CYC"/>
<dbReference type="SMR" id="O58739"/>
<dbReference type="STRING" id="70601.gene:9377968"/>
<dbReference type="EnsemblBacteria" id="BAA30108">
    <property type="protein sequence ID" value="BAA30108"/>
    <property type="gene ID" value="BAA30108"/>
</dbReference>
<dbReference type="GeneID" id="1443332"/>
<dbReference type="KEGG" id="pho:PH1011"/>
<dbReference type="eggNOG" id="arCOG01886">
    <property type="taxonomic scope" value="Archaea"/>
</dbReference>
<dbReference type="OrthoDB" id="8389at2157"/>
<dbReference type="BRENDA" id="6.1.1.1">
    <property type="organism ID" value="5244"/>
</dbReference>
<dbReference type="EvolutionaryTrace" id="O58739"/>
<dbReference type="Proteomes" id="UP000000752">
    <property type="component" value="Chromosome"/>
</dbReference>
<dbReference type="GO" id="GO:0005737">
    <property type="term" value="C:cytoplasm"/>
    <property type="evidence" value="ECO:0007669"/>
    <property type="project" value="UniProtKB-SubCell"/>
</dbReference>
<dbReference type="GO" id="GO:0005524">
    <property type="term" value="F:ATP binding"/>
    <property type="evidence" value="ECO:0007669"/>
    <property type="project" value="UniProtKB-UniRule"/>
</dbReference>
<dbReference type="GO" id="GO:0004831">
    <property type="term" value="F:tyrosine-tRNA ligase activity"/>
    <property type="evidence" value="ECO:0007669"/>
    <property type="project" value="UniProtKB-UniRule"/>
</dbReference>
<dbReference type="GO" id="GO:0006437">
    <property type="term" value="P:tyrosyl-tRNA aminoacylation"/>
    <property type="evidence" value="ECO:0007669"/>
    <property type="project" value="UniProtKB-UniRule"/>
</dbReference>
<dbReference type="CDD" id="cd00805">
    <property type="entry name" value="TyrRS_core"/>
    <property type="match status" value="1"/>
</dbReference>
<dbReference type="Gene3D" id="3.40.50.620">
    <property type="entry name" value="HUPs"/>
    <property type="match status" value="1"/>
</dbReference>
<dbReference type="Gene3D" id="1.10.240.10">
    <property type="entry name" value="Tyrosyl-Transfer RNA Synthetase"/>
    <property type="match status" value="1"/>
</dbReference>
<dbReference type="HAMAP" id="MF_02009">
    <property type="entry name" value="Tyr_tRNA_synth_type4"/>
    <property type="match status" value="1"/>
</dbReference>
<dbReference type="InterPro" id="IPR002305">
    <property type="entry name" value="aa-tRNA-synth_Ic"/>
</dbReference>
<dbReference type="InterPro" id="IPR014729">
    <property type="entry name" value="Rossmann-like_a/b/a_fold"/>
</dbReference>
<dbReference type="InterPro" id="IPR002307">
    <property type="entry name" value="Tyr-tRNA-ligase"/>
</dbReference>
<dbReference type="InterPro" id="IPR023678">
    <property type="entry name" value="Tyr-tRNA-ligase_4"/>
</dbReference>
<dbReference type="InterPro" id="IPR023617">
    <property type="entry name" value="Tyr-tRNA-ligase_arc/euk-type"/>
</dbReference>
<dbReference type="InterPro" id="IPR050489">
    <property type="entry name" value="Tyr-tRNA_synthase"/>
</dbReference>
<dbReference type="NCBIfam" id="NF006330">
    <property type="entry name" value="PRK08560.1"/>
    <property type="match status" value="1"/>
</dbReference>
<dbReference type="PANTHER" id="PTHR46264:SF4">
    <property type="entry name" value="TYROSINE--TRNA LIGASE, CYTOPLASMIC"/>
    <property type="match status" value="1"/>
</dbReference>
<dbReference type="PANTHER" id="PTHR46264">
    <property type="entry name" value="TYROSINE-TRNA LIGASE"/>
    <property type="match status" value="1"/>
</dbReference>
<dbReference type="Pfam" id="PF00579">
    <property type="entry name" value="tRNA-synt_1b"/>
    <property type="match status" value="1"/>
</dbReference>
<dbReference type="PIRSF" id="PIRSF006588">
    <property type="entry name" value="TyrRS_arch_euk"/>
    <property type="match status" value="1"/>
</dbReference>
<dbReference type="SUPFAM" id="SSF52374">
    <property type="entry name" value="Nucleotidylyl transferase"/>
    <property type="match status" value="1"/>
</dbReference>
<keyword id="KW-0002">3D-structure</keyword>
<keyword id="KW-0030">Aminoacyl-tRNA synthetase</keyword>
<keyword id="KW-0067">ATP-binding</keyword>
<keyword id="KW-0963">Cytoplasm</keyword>
<keyword id="KW-0436">Ligase</keyword>
<keyword id="KW-0547">Nucleotide-binding</keyword>
<keyword id="KW-0648">Protein biosynthesis</keyword>
<gene>
    <name evidence="1" type="primary">tyrS</name>
    <name type="ordered locus">PH1011</name>
</gene>